<reference key="1">
    <citation type="journal article" date="2000" name="Nature">
        <title>The genome sequence of the food-borne pathogen Campylobacter jejuni reveals hypervariable sequences.</title>
        <authorList>
            <person name="Parkhill J."/>
            <person name="Wren B.W."/>
            <person name="Mungall K.L."/>
            <person name="Ketley J.M."/>
            <person name="Churcher C.M."/>
            <person name="Basham D."/>
            <person name="Chillingworth T."/>
            <person name="Davies R.M."/>
            <person name="Feltwell T."/>
            <person name="Holroyd S."/>
            <person name="Jagels K."/>
            <person name="Karlyshev A.V."/>
            <person name="Moule S."/>
            <person name="Pallen M.J."/>
            <person name="Penn C.W."/>
            <person name="Quail M.A."/>
            <person name="Rajandream M.A."/>
            <person name="Rutherford K.M."/>
            <person name="van Vliet A.H.M."/>
            <person name="Whitehead S."/>
            <person name="Barrell B.G."/>
        </authorList>
    </citation>
    <scope>NUCLEOTIDE SEQUENCE [LARGE SCALE GENOMIC DNA]</scope>
    <source>
        <strain>ATCC 700819 / NCTC 11168</strain>
    </source>
</reference>
<protein>
    <recommendedName>
        <fullName>GTP cyclohydrolase 1 type 2 homolog</fullName>
    </recommendedName>
</protein>
<evidence type="ECO:0000250" key="1">
    <source>
        <dbReference type="UniProtKB" id="P0AFP6"/>
    </source>
</evidence>
<evidence type="ECO:0000305" key="2"/>
<organism>
    <name type="scientific">Campylobacter jejuni subsp. jejuni serotype O:2 (strain ATCC 700819 / NCTC 11168)</name>
    <dbReference type="NCBI Taxonomy" id="192222"/>
    <lineage>
        <taxon>Bacteria</taxon>
        <taxon>Pseudomonadati</taxon>
        <taxon>Campylobacterota</taxon>
        <taxon>Epsilonproteobacteria</taxon>
        <taxon>Campylobacterales</taxon>
        <taxon>Campylobacteraceae</taxon>
        <taxon>Campylobacter</taxon>
    </lineage>
</organism>
<proteinExistence type="inferred from homology"/>
<gene>
    <name type="ordered locus">Cj0705</name>
</gene>
<feature type="chain" id="PRO_0000147300" description="GTP cyclohydrolase 1 type 2 homolog">
    <location>
        <begin position="1"/>
        <end position="241"/>
    </location>
</feature>
<feature type="binding site" evidence="1">
    <location>
        <position position="62"/>
    </location>
    <ligand>
        <name>a divalent metal cation</name>
        <dbReference type="ChEBI" id="CHEBI:60240"/>
        <label>1</label>
    </ligand>
</feature>
<feature type="binding site" evidence="1">
    <location>
        <position position="63"/>
    </location>
    <ligand>
        <name>a divalent metal cation</name>
        <dbReference type="ChEBI" id="CHEBI:60240"/>
        <label>2</label>
    </ligand>
</feature>
<feature type="binding site" evidence="1">
    <location>
        <position position="101"/>
    </location>
    <ligand>
        <name>a divalent metal cation</name>
        <dbReference type="ChEBI" id="CHEBI:60240"/>
        <label>1</label>
    </ligand>
</feature>
<feature type="binding site" evidence="1">
    <location>
        <position position="207"/>
    </location>
    <ligand>
        <name>a divalent metal cation</name>
        <dbReference type="ChEBI" id="CHEBI:60240"/>
        <label>2</label>
    </ligand>
</feature>
<feature type="binding site" evidence="1">
    <location>
        <position position="211"/>
    </location>
    <ligand>
        <name>a divalent metal cation</name>
        <dbReference type="ChEBI" id="CHEBI:60240"/>
        <label>1</label>
    </ligand>
</feature>
<feature type="binding site" evidence="1">
    <location>
        <position position="211"/>
    </location>
    <ligand>
        <name>a divalent metal cation</name>
        <dbReference type="ChEBI" id="CHEBI:60240"/>
        <label>2</label>
    </ligand>
</feature>
<sequence>MKLSEIYNFLDQLSPFNIQESWDNSGILLGDRDSEISTVYLSLDIDENIIKEASENSLIITHHPLIFKGLKDLYDKTYPRAFIKEMIYKNISLISMHTNYDLSHLNTYFTEEILGFKISFKDKFLIYVENSMSFEALCDWVKKKLNLQILRVSDCGKKDIKRIAICTGSGGDLISKVDADCFLSGDFKYHQALEALSNQISLIDLGHFESERYFSQCLAKDLKNLPLQVIITVSKNPFQYF</sequence>
<accession>Q9PPK2</accession>
<accession>Q0PAH4</accession>
<dbReference type="EMBL" id="AL111168">
    <property type="protein sequence ID" value="CAL34842.1"/>
    <property type="molecule type" value="Genomic_DNA"/>
</dbReference>
<dbReference type="PIR" id="D81341">
    <property type="entry name" value="D81341"/>
</dbReference>
<dbReference type="RefSeq" id="WP_002852315.1">
    <property type="nucleotide sequence ID" value="NZ_SZUC01000002.1"/>
</dbReference>
<dbReference type="RefSeq" id="YP_002344123.1">
    <property type="nucleotide sequence ID" value="NC_002163.1"/>
</dbReference>
<dbReference type="SMR" id="Q9PPK2"/>
<dbReference type="IntAct" id="Q9PPK2">
    <property type="interactions" value="7"/>
</dbReference>
<dbReference type="STRING" id="192222.Cj0705"/>
<dbReference type="PaxDb" id="192222-Cj0705"/>
<dbReference type="EnsemblBacteria" id="CAL34842">
    <property type="protein sequence ID" value="CAL34842"/>
    <property type="gene ID" value="Cj0705"/>
</dbReference>
<dbReference type="GeneID" id="905024"/>
<dbReference type="KEGG" id="cje:Cj0705"/>
<dbReference type="PATRIC" id="fig|192222.6.peg.697"/>
<dbReference type="eggNOG" id="COG0327">
    <property type="taxonomic scope" value="Bacteria"/>
</dbReference>
<dbReference type="HOGENOM" id="CLU_037423_2_1_7"/>
<dbReference type="OrthoDB" id="9792792at2"/>
<dbReference type="Proteomes" id="UP000000799">
    <property type="component" value="Chromosome"/>
</dbReference>
<dbReference type="GO" id="GO:0005737">
    <property type="term" value="C:cytoplasm"/>
    <property type="evidence" value="ECO:0007669"/>
    <property type="project" value="TreeGrafter"/>
</dbReference>
<dbReference type="GO" id="GO:0046872">
    <property type="term" value="F:metal ion binding"/>
    <property type="evidence" value="ECO:0007669"/>
    <property type="project" value="UniProtKB-KW"/>
</dbReference>
<dbReference type="FunFam" id="3.40.1390.30:FF:000001">
    <property type="entry name" value="GTP cyclohydrolase 1 type 2"/>
    <property type="match status" value="1"/>
</dbReference>
<dbReference type="Gene3D" id="3.40.1390.30">
    <property type="entry name" value="NIF3 (NGG1p interacting factor 3)-like"/>
    <property type="match status" value="2"/>
</dbReference>
<dbReference type="InterPro" id="IPR002678">
    <property type="entry name" value="DUF34/NIF3"/>
</dbReference>
<dbReference type="InterPro" id="IPR036069">
    <property type="entry name" value="DUF34/NIF3_sf"/>
</dbReference>
<dbReference type="NCBIfam" id="TIGR00486">
    <property type="entry name" value="YbgI_SA1388"/>
    <property type="match status" value="1"/>
</dbReference>
<dbReference type="PANTHER" id="PTHR13799:SF14">
    <property type="entry name" value="GTP CYCLOHYDROLASE 1 TYPE 2 HOMOLOG"/>
    <property type="match status" value="1"/>
</dbReference>
<dbReference type="PANTHER" id="PTHR13799">
    <property type="entry name" value="NGG1 INTERACTING FACTOR 3"/>
    <property type="match status" value="1"/>
</dbReference>
<dbReference type="Pfam" id="PF01784">
    <property type="entry name" value="DUF34_NIF3"/>
    <property type="match status" value="1"/>
</dbReference>
<dbReference type="SUPFAM" id="SSF102705">
    <property type="entry name" value="NIF3 (NGG1p interacting factor 3)-like"/>
    <property type="match status" value="1"/>
</dbReference>
<comment type="subunit">
    <text evidence="1">Homohexamer.</text>
</comment>
<comment type="similarity">
    <text evidence="2">Belongs to the GTP cyclohydrolase I type 2/NIF3 family.</text>
</comment>
<keyword id="KW-0479">Metal-binding</keyword>
<keyword id="KW-1185">Reference proteome</keyword>
<name>GCH1L_CAMJE</name>